<gene>
    <name type="primary">sconC</name>
    <name type="synonym">skpA</name>
    <name type="ORF">ACLA_009360</name>
</gene>
<keyword id="KW-1185">Reference proteome</keyword>
<keyword id="KW-0833">Ubl conjugation pathway</keyword>
<comment type="function">
    <text evidence="1">Essential component of the SCF (SKP1-CUL1-F-box protein) E3 ubiquitin ligase complexes, which mediate the ubiquitination and subsequent proteasomal degradation of target proteins. Controls sulfur metabolite repression, probably by mediating the inactivation or degradation of the metR transcription factor (By similarity).</text>
</comment>
<comment type="pathway">
    <text>Protein modification; protein ubiquitination.</text>
</comment>
<comment type="subunit">
    <text evidence="1">Component of the SCF (SKP1-CUL1-F-box protein) E3 ubiquitin ligase complexes.</text>
</comment>
<comment type="similarity">
    <text evidence="2">Belongs to the SKP1 family.</text>
</comment>
<organism>
    <name type="scientific">Aspergillus clavatus (strain ATCC 1007 / CBS 513.65 / DSM 816 / NCTC 3887 / NRRL 1 / QM 1276 / 107)</name>
    <dbReference type="NCBI Taxonomy" id="344612"/>
    <lineage>
        <taxon>Eukaryota</taxon>
        <taxon>Fungi</taxon>
        <taxon>Dikarya</taxon>
        <taxon>Ascomycota</taxon>
        <taxon>Pezizomycotina</taxon>
        <taxon>Eurotiomycetes</taxon>
        <taxon>Eurotiomycetidae</taxon>
        <taxon>Eurotiales</taxon>
        <taxon>Aspergillaceae</taxon>
        <taxon>Aspergillus</taxon>
        <taxon>Aspergillus subgen. Fumigati</taxon>
    </lineage>
</organism>
<dbReference type="EMBL" id="DS027049">
    <property type="protein sequence ID" value="EAW12513.1"/>
    <property type="molecule type" value="Genomic_DNA"/>
</dbReference>
<dbReference type="RefSeq" id="XP_001273939.1">
    <property type="nucleotide sequence ID" value="XM_001273938.1"/>
</dbReference>
<dbReference type="SMR" id="A1C9U5"/>
<dbReference type="STRING" id="344612.A1C9U5"/>
<dbReference type="EnsemblFungi" id="EAW12513">
    <property type="protein sequence ID" value="EAW12513"/>
    <property type="gene ID" value="ACLA_009360"/>
</dbReference>
<dbReference type="GeneID" id="4706645"/>
<dbReference type="KEGG" id="act:ACLA_009360"/>
<dbReference type="VEuPathDB" id="FungiDB:ACLA_009360"/>
<dbReference type="eggNOG" id="KOG1724">
    <property type="taxonomic scope" value="Eukaryota"/>
</dbReference>
<dbReference type="HOGENOM" id="CLU_059252_4_0_1"/>
<dbReference type="OMA" id="DKYTASM"/>
<dbReference type="OrthoDB" id="2342932at2759"/>
<dbReference type="UniPathway" id="UPA00143"/>
<dbReference type="Proteomes" id="UP000006701">
    <property type="component" value="Unassembled WGS sequence"/>
</dbReference>
<dbReference type="GO" id="GO:0031518">
    <property type="term" value="C:CBF3 complex"/>
    <property type="evidence" value="ECO:0007669"/>
    <property type="project" value="EnsemblFungi"/>
</dbReference>
<dbReference type="GO" id="GO:0000776">
    <property type="term" value="C:kinetochore"/>
    <property type="evidence" value="ECO:0007669"/>
    <property type="project" value="EnsemblFungi"/>
</dbReference>
<dbReference type="GO" id="GO:0043224">
    <property type="term" value="C:nuclear SCF ubiquitin ligase complex"/>
    <property type="evidence" value="ECO:0007669"/>
    <property type="project" value="EnsemblFungi"/>
</dbReference>
<dbReference type="GO" id="GO:0043291">
    <property type="term" value="C:RAVE complex"/>
    <property type="evidence" value="ECO:0007669"/>
    <property type="project" value="EnsemblFungi"/>
</dbReference>
<dbReference type="GO" id="GO:0017117">
    <property type="term" value="C:single-stranded DNA-dependent ATP-dependent DNA helicase complex"/>
    <property type="evidence" value="ECO:0007669"/>
    <property type="project" value="EnsemblFungi"/>
</dbReference>
<dbReference type="GO" id="GO:0003688">
    <property type="term" value="F:DNA replication origin binding"/>
    <property type="evidence" value="ECO:0007669"/>
    <property type="project" value="EnsemblFungi"/>
</dbReference>
<dbReference type="GO" id="GO:0061630">
    <property type="term" value="F:ubiquitin protein ligase activity"/>
    <property type="evidence" value="ECO:0007669"/>
    <property type="project" value="EnsemblFungi"/>
</dbReference>
<dbReference type="GO" id="GO:0010458">
    <property type="term" value="P:exit from mitosis"/>
    <property type="evidence" value="ECO:0007669"/>
    <property type="project" value="EnsemblFungi"/>
</dbReference>
<dbReference type="GO" id="GO:0000082">
    <property type="term" value="P:G1/S transition of mitotic cell cycle"/>
    <property type="evidence" value="ECO:0007669"/>
    <property type="project" value="EnsemblFungi"/>
</dbReference>
<dbReference type="GO" id="GO:0000086">
    <property type="term" value="P:G2/M transition of mitotic cell cycle"/>
    <property type="evidence" value="ECO:0007669"/>
    <property type="project" value="EnsemblFungi"/>
</dbReference>
<dbReference type="GO" id="GO:0051382">
    <property type="term" value="P:kinetochore assembly"/>
    <property type="evidence" value="ECO:0007669"/>
    <property type="project" value="EnsemblFungi"/>
</dbReference>
<dbReference type="GO" id="GO:0101026">
    <property type="term" value="P:mitotic nuclear membrane biogenesis"/>
    <property type="evidence" value="ECO:0007669"/>
    <property type="project" value="EnsemblFungi"/>
</dbReference>
<dbReference type="GO" id="GO:2000766">
    <property type="term" value="P:negative regulation of cytoplasmic translation"/>
    <property type="evidence" value="ECO:0007669"/>
    <property type="project" value="EnsemblFungi"/>
</dbReference>
<dbReference type="GO" id="GO:0045841">
    <property type="term" value="P:negative regulation of mitotic metaphase/anaphase transition"/>
    <property type="evidence" value="ECO:0007669"/>
    <property type="project" value="EnsemblFungi"/>
</dbReference>
<dbReference type="GO" id="GO:0010828">
    <property type="term" value="P:positive regulation of D-glucose transmembrane transport"/>
    <property type="evidence" value="ECO:0007669"/>
    <property type="project" value="EnsemblFungi"/>
</dbReference>
<dbReference type="GO" id="GO:0045116">
    <property type="term" value="P:protein neddylation"/>
    <property type="evidence" value="ECO:0007669"/>
    <property type="project" value="EnsemblFungi"/>
</dbReference>
<dbReference type="GO" id="GO:0016567">
    <property type="term" value="P:protein ubiquitination"/>
    <property type="evidence" value="ECO:0007669"/>
    <property type="project" value="UniProtKB-UniPathway"/>
</dbReference>
<dbReference type="GO" id="GO:0000018">
    <property type="term" value="P:regulation of DNA recombination"/>
    <property type="evidence" value="ECO:0007669"/>
    <property type="project" value="EnsemblFungi"/>
</dbReference>
<dbReference type="GO" id="GO:0007096">
    <property type="term" value="P:regulation of exit from mitosis"/>
    <property type="evidence" value="ECO:0007669"/>
    <property type="project" value="EnsemblFungi"/>
</dbReference>
<dbReference type="GO" id="GO:0043254">
    <property type="term" value="P:regulation of protein-containing complex assembly"/>
    <property type="evidence" value="ECO:0007669"/>
    <property type="project" value="EnsemblFungi"/>
</dbReference>
<dbReference type="GO" id="GO:0000712">
    <property type="term" value="P:resolution of meiotic recombination intermediates"/>
    <property type="evidence" value="ECO:0007669"/>
    <property type="project" value="EnsemblFungi"/>
</dbReference>
<dbReference type="GO" id="GO:0031146">
    <property type="term" value="P:SCF-dependent proteasomal ubiquitin-dependent protein catabolic process"/>
    <property type="evidence" value="ECO:0007669"/>
    <property type="project" value="EnsemblFungi"/>
</dbReference>
<dbReference type="GO" id="GO:0000921">
    <property type="term" value="P:septin ring assembly"/>
    <property type="evidence" value="ECO:0007669"/>
    <property type="project" value="EnsemblFungi"/>
</dbReference>
<dbReference type="GO" id="GO:0030466">
    <property type="term" value="P:silent mating-type cassette heterochromatin formation"/>
    <property type="evidence" value="ECO:0007669"/>
    <property type="project" value="EnsemblFungi"/>
</dbReference>
<dbReference type="GO" id="GO:0007035">
    <property type="term" value="P:vacuolar acidification"/>
    <property type="evidence" value="ECO:0007669"/>
    <property type="project" value="EnsemblFungi"/>
</dbReference>
<dbReference type="GO" id="GO:0070072">
    <property type="term" value="P:vacuolar proton-transporting V-type ATPase complex assembly"/>
    <property type="evidence" value="ECO:0007669"/>
    <property type="project" value="EnsemblFungi"/>
</dbReference>
<dbReference type="CDD" id="cd18322">
    <property type="entry name" value="BTB_POZ_SKP1"/>
    <property type="match status" value="1"/>
</dbReference>
<dbReference type="FunFam" id="3.30.710.10:FF:000026">
    <property type="entry name" value="E3 ubiquitin ligase complex SCF subunit"/>
    <property type="match status" value="1"/>
</dbReference>
<dbReference type="Gene3D" id="3.30.710.10">
    <property type="entry name" value="Potassium Channel Kv1.1, Chain A"/>
    <property type="match status" value="1"/>
</dbReference>
<dbReference type="InterPro" id="IPR016897">
    <property type="entry name" value="SKP1"/>
</dbReference>
<dbReference type="InterPro" id="IPR001232">
    <property type="entry name" value="SKP1-like"/>
</dbReference>
<dbReference type="InterPro" id="IPR036296">
    <property type="entry name" value="SKP1-like_dim_sf"/>
</dbReference>
<dbReference type="InterPro" id="IPR011333">
    <property type="entry name" value="SKP1/BTB/POZ_sf"/>
</dbReference>
<dbReference type="InterPro" id="IPR016072">
    <property type="entry name" value="Skp1_comp_dimer"/>
</dbReference>
<dbReference type="InterPro" id="IPR016073">
    <property type="entry name" value="Skp1_comp_POZ"/>
</dbReference>
<dbReference type="PANTHER" id="PTHR11165">
    <property type="entry name" value="SKP1"/>
    <property type="match status" value="1"/>
</dbReference>
<dbReference type="Pfam" id="PF01466">
    <property type="entry name" value="Skp1"/>
    <property type="match status" value="1"/>
</dbReference>
<dbReference type="Pfam" id="PF03931">
    <property type="entry name" value="Skp1_POZ"/>
    <property type="match status" value="1"/>
</dbReference>
<dbReference type="PIRSF" id="PIRSF028729">
    <property type="entry name" value="E3_ubiquit_lig_SCF_Skp"/>
    <property type="match status" value="1"/>
</dbReference>
<dbReference type="SMART" id="SM00512">
    <property type="entry name" value="Skp1"/>
    <property type="match status" value="1"/>
</dbReference>
<dbReference type="SUPFAM" id="SSF54695">
    <property type="entry name" value="POZ domain"/>
    <property type="match status" value="1"/>
</dbReference>
<dbReference type="SUPFAM" id="SSF81382">
    <property type="entry name" value="Skp1 dimerisation domain-like"/>
    <property type="match status" value="1"/>
</dbReference>
<protein>
    <recommendedName>
        <fullName>E3 ubiquitin ligase complex SCF subunit sconC</fullName>
    </recommendedName>
    <alternativeName>
        <fullName>Sulfur controller C</fullName>
    </alternativeName>
    <alternativeName>
        <fullName>Sulfur metabolite repression control protein C</fullName>
    </alternativeName>
</protein>
<proteinExistence type="inferred from homology"/>
<reference key="1">
    <citation type="journal article" date="2008" name="PLoS Genet.">
        <title>Genomic islands in the pathogenic filamentous fungus Aspergillus fumigatus.</title>
        <authorList>
            <person name="Fedorova N.D."/>
            <person name="Khaldi N."/>
            <person name="Joardar V.S."/>
            <person name="Maiti R."/>
            <person name="Amedeo P."/>
            <person name="Anderson M.J."/>
            <person name="Crabtree J."/>
            <person name="Silva J.C."/>
            <person name="Badger J.H."/>
            <person name="Albarraq A."/>
            <person name="Angiuoli S."/>
            <person name="Bussey H."/>
            <person name="Bowyer P."/>
            <person name="Cotty P.J."/>
            <person name="Dyer P.S."/>
            <person name="Egan A."/>
            <person name="Galens K."/>
            <person name="Fraser-Liggett C.M."/>
            <person name="Haas B.J."/>
            <person name="Inman J.M."/>
            <person name="Kent R."/>
            <person name="Lemieux S."/>
            <person name="Malavazi I."/>
            <person name="Orvis J."/>
            <person name="Roemer T."/>
            <person name="Ronning C.M."/>
            <person name="Sundaram J.P."/>
            <person name="Sutton G."/>
            <person name="Turner G."/>
            <person name="Venter J.C."/>
            <person name="White O.R."/>
            <person name="Whitty B.R."/>
            <person name="Youngman P."/>
            <person name="Wolfe K.H."/>
            <person name="Goldman G.H."/>
            <person name="Wortman J.R."/>
            <person name="Jiang B."/>
            <person name="Denning D.W."/>
            <person name="Nierman W.C."/>
        </authorList>
    </citation>
    <scope>NUCLEOTIDE SEQUENCE [LARGE SCALE GENOMIC DNA]</scope>
    <source>
        <strain>ATCC 1007 / CBS 513.65 / DSM 816 / NCTC 3887 / NRRL 1 / QM 1276 / 107</strain>
    </source>
</reference>
<name>SKP1_ASPCL</name>
<accession>A1C9U5</accession>
<feature type="chain" id="PRO_0000397260" description="E3 ubiquitin ligase complex SCF subunit sconC">
    <location>
        <begin position="1"/>
        <end position="159"/>
    </location>
</feature>
<feature type="region of interest" description="Interaction with the F-box domain of F-box proteins" evidence="1">
    <location>
        <begin position="101"/>
        <end position="159"/>
    </location>
</feature>
<sequence length="159" mass="18156">MSTTVTLTSSDGVDLTVDRDVAERSVLIKNMLEDLGESGEAIPIPNVNEVVLKKVIEWCTHHKNDPPSTGDDDDSRRKTTDIDEWDQKFMQVDQEMLFEIILAANYLDIKALLDVGCKTVANMIKGKSPEEIRKTFNIQNDFTPEEEDQIRRENEWAEE</sequence>
<evidence type="ECO:0000250" key="1"/>
<evidence type="ECO:0000305" key="2"/>